<accession>P63595</accession>
<accession>Q97Q55</accession>
<evidence type="ECO:0000255" key="1">
    <source>
        <dbReference type="HAMAP-Rule" id="MF_00222"/>
    </source>
</evidence>
<protein>
    <recommendedName>
        <fullName evidence="1">Shikimate dehydrogenase (NADP(+))</fullName>
        <shortName evidence="1">SDH</shortName>
        <ecNumber evidence="1">1.1.1.25</ecNumber>
    </recommendedName>
</protein>
<reference key="1">
    <citation type="journal article" date="2001" name="Science">
        <title>Complete genome sequence of a virulent isolate of Streptococcus pneumoniae.</title>
        <authorList>
            <person name="Tettelin H."/>
            <person name="Nelson K.E."/>
            <person name="Paulsen I.T."/>
            <person name="Eisen J.A."/>
            <person name="Read T.D."/>
            <person name="Peterson S.N."/>
            <person name="Heidelberg J.F."/>
            <person name="DeBoy R.T."/>
            <person name="Haft D.H."/>
            <person name="Dodson R.J."/>
            <person name="Durkin A.S."/>
            <person name="Gwinn M.L."/>
            <person name="Kolonay J.F."/>
            <person name="Nelson W.C."/>
            <person name="Peterson J.D."/>
            <person name="Umayam L.A."/>
            <person name="White O."/>
            <person name="Salzberg S.L."/>
            <person name="Lewis M.R."/>
            <person name="Radune D."/>
            <person name="Holtzapple E.K."/>
            <person name="Khouri H.M."/>
            <person name="Wolf A.M."/>
            <person name="Utterback T.R."/>
            <person name="Hansen C.L."/>
            <person name="McDonald L.A."/>
            <person name="Feldblyum T.V."/>
            <person name="Angiuoli S.V."/>
            <person name="Dickinson T."/>
            <person name="Hickey E.K."/>
            <person name="Holt I.E."/>
            <person name="Loftus B.J."/>
            <person name="Yang F."/>
            <person name="Smith H.O."/>
            <person name="Venter J.C."/>
            <person name="Dougherty B.A."/>
            <person name="Morrison D.A."/>
            <person name="Hollingshead S.K."/>
            <person name="Fraser C.M."/>
        </authorList>
    </citation>
    <scope>NUCLEOTIDE SEQUENCE [LARGE SCALE GENOMIC DNA]</scope>
    <source>
        <strain>ATCC BAA-334 / TIGR4</strain>
    </source>
</reference>
<comment type="function">
    <text evidence="1">Involved in the biosynthesis of the chorismate, which leads to the biosynthesis of aromatic amino acids. Catalyzes the reversible NADPH linked reduction of 3-dehydroshikimate (DHSA) to yield shikimate (SA).</text>
</comment>
<comment type="catalytic activity">
    <reaction evidence="1">
        <text>shikimate + NADP(+) = 3-dehydroshikimate + NADPH + H(+)</text>
        <dbReference type="Rhea" id="RHEA:17737"/>
        <dbReference type="ChEBI" id="CHEBI:15378"/>
        <dbReference type="ChEBI" id="CHEBI:16630"/>
        <dbReference type="ChEBI" id="CHEBI:36208"/>
        <dbReference type="ChEBI" id="CHEBI:57783"/>
        <dbReference type="ChEBI" id="CHEBI:58349"/>
        <dbReference type="EC" id="1.1.1.25"/>
    </reaction>
</comment>
<comment type="pathway">
    <text evidence="1">Metabolic intermediate biosynthesis; chorismate biosynthesis; chorismate from D-erythrose 4-phosphate and phosphoenolpyruvate: step 4/7.</text>
</comment>
<comment type="subunit">
    <text evidence="1">Homodimer.</text>
</comment>
<comment type="similarity">
    <text evidence="1">Belongs to the shikimate dehydrogenase family.</text>
</comment>
<keyword id="KW-0028">Amino-acid biosynthesis</keyword>
<keyword id="KW-0057">Aromatic amino acid biosynthesis</keyword>
<keyword id="KW-0521">NADP</keyword>
<keyword id="KW-0560">Oxidoreductase</keyword>
<keyword id="KW-1185">Reference proteome</keyword>
<proteinExistence type="inferred from homology"/>
<dbReference type="EC" id="1.1.1.25" evidence="1"/>
<dbReference type="EMBL" id="AE005672">
    <property type="protein sequence ID" value="AAK75474.1"/>
    <property type="molecule type" value="Genomic_DNA"/>
</dbReference>
<dbReference type="PIR" id="A95160">
    <property type="entry name" value="A95160"/>
</dbReference>
<dbReference type="RefSeq" id="WP_000762485.1">
    <property type="nucleotide sequence ID" value="NZ_CP155539.1"/>
</dbReference>
<dbReference type="SMR" id="P63595"/>
<dbReference type="PaxDb" id="170187-SP_1376"/>
<dbReference type="EnsemblBacteria" id="AAK75474">
    <property type="protein sequence ID" value="AAK75474"/>
    <property type="gene ID" value="SP_1376"/>
</dbReference>
<dbReference type="KEGG" id="spn:SP_1376"/>
<dbReference type="eggNOG" id="COG0169">
    <property type="taxonomic scope" value="Bacteria"/>
</dbReference>
<dbReference type="PhylomeDB" id="P63595"/>
<dbReference type="BioCyc" id="SPNE170187:G1FZB-1385-MONOMER"/>
<dbReference type="UniPathway" id="UPA00053">
    <property type="reaction ID" value="UER00087"/>
</dbReference>
<dbReference type="Proteomes" id="UP000000585">
    <property type="component" value="Chromosome"/>
</dbReference>
<dbReference type="GO" id="GO:0050661">
    <property type="term" value="F:NADP binding"/>
    <property type="evidence" value="ECO:0007669"/>
    <property type="project" value="InterPro"/>
</dbReference>
<dbReference type="GO" id="GO:0004764">
    <property type="term" value="F:shikimate 3-dehydrogenase (NADP+) activity"/>
    <property type="evidence" value="ECO:0007669"/>
    <property type="project" value="UniProtKB-UniRule"/>
</dbReference>
<dbReference type="GO" id="GO:0008652">
    <property type="term" value="P:amino acid biosynthetic process"/>
    <property type="evidence" value="ECO:0007669"/>
    <property type="project" value="UniProtKB-KW"/>
</dbReference>
<dbReference type="GO" id="GO:0009073">
    <property type="term" value="P:aromatic amino acid family biosynthetic process"/>
    <property type="evidence" value="ECO:0007669"/>
    <property type="project" value="UniProtKB-KW"/>
</dbReference>
<dbReference type="GO" id="GO:0009423">
    <property type="term" value="P:chorismate biosynthetic process"/>
    <property type="evidence" value="ECO:0007669"/>
    <property type="project" value="UniProtKB-UniRule"/>
</dbReference>
<dbReference type="GO" id="GO:0019632">
    <property type="term" value="P:shikimate metabolic process"/>
    <property type="evidence" value="ECO:0007669"/>
    <property type="project" value="InterPro"/>
</dbReference>
<dbReference type="CDD" id="cd01065">
    <property type="entry name" value="NAD_bind_Shikimate_DH"/>
    <property type="match status" value="1"/>
</dbReference>
<dbReference type="FunFam" id="3.40.50.10860:FF:000004">
    <property type="entry name" value="Quinate/shikimate dehydrogenase"/>
    <property type="match status" value="1"/>
</dbReference>
<dbReference type="FunFam" id="3.40.50.720:FF:000505">
    <property type="entry name" value="Shikimate dehydrogenase (NADP(+))"/>
    <property type="match status" value="1"/>
</dbReference>
<dbReference type="Gene3D" id="3.40.50.10860">
    <property type="entry name" value="Leucine Dehydrogenase, chain A, domain 1"/>
    <property type="match status" value="1"/>
</dbReference>
<dbReference type="Gene3D" id="3.40.50.720">
    <property type="entry name" value="NAD(P)-binding Rossmann-like Domain"/>
    <property type="match status" value="1"/>
</dbReference>
<dbReference type="HAMAP" id="MF_00222">
    <property type="entry name" value="Shikimate_DH_AroE"/>
    <property type="match status" value="1"/>
</dbReference>
<dbReference type="InterPro" id="IPR046346">
    <property type="entry name" value="Aminoacid_DH-like_N_sf"/>
</dbReference>
<dbReference type="InterPro" id="IPR036291">
    <property type="entry name" value="NAD(P)-bd_dom_sf"/>
</dbReference>
<dbReference type="InterPro" id="IPR041121">
    <property type="entry name" value="SDH_C"/>
</dbReference>
<dbReference type="InterPro" id="IPR011342">
    <property type="entry name" value="Shikimate_DH"/>
</dbReference>
<dbReference type="InterPro" id="IPR013708">
    <property type="entry name" value="Shikimate_DH-bd_N"/>
</dbReference>
<dbReference type="InterPro" id="IPR022893">
    <property type="entry name" value="Shikimate_DH_fam"/>
</dbReference>
<dbReference type="NCBIfam" id="TIGR00507">
    <property type="entry name" value="aroE"/>
    <property type="match status" value="1"/>
</dbReference>
<dbReference type="NCBIfam" id="NF001315">
    <property type="entry name" value="PRK00258.2-4"/>
    <property type="match status" value="1"/>
</dbReference>
<dbReference type="PANTHER" id="PTHR21089:SF1">
    <property type="entry name" value="BIFUNCTIONAL 3-DEHYDROQUINATE DEHYDRATASE_SHIKIMATE DEHYDROGENASE, CHLOROPLASTIC"/>
    <property type="match status" value="1"/>
</dbReference>
<dbReference type="PANTHER" id="PTHR21089">
    <property type="entry name" value="SHIKIMATE DEHYDROGENASE"/>
    <property type="match status" value="1"/>
</dbReference>
<dbReference type="Pfam" id="PF18317">
    <property type="entry name" value="SDH_C"/>
    <property type="match status" value="1"/>
</dbReference>
<dbReference type="Pfam" id="PF08501">
    <property type="entry name" value="Shikimate_dh_N"/>
    <property type="match status" value="1"/>
</dbReference>
<dbReference type="SUPFAM" id="SSF53223">
    <property type="entry name" value="Aminoacid dehydrogenase-like, N-terminal domain"/>
    <property type="match status" value="1"/>
</dbReference>
<dbReference type="SUPFAM" id="SSF51735">
    <property type="entry name" value="NAD(P)-binding Rossmann-fold domains"/>
    <property type="match status" value="1"/>
</dbReference>
<organism>
    <name type="scientific">Streptococcus pneumoniae serotype 4 (strain ATCC BAA-334 / TIGR4)</name>
    <dbReference type="NCBI Taxonomy" id="170187"/>
    <lineage>
        <taxon>Bacteria</taxon>
        <taxon>Bacillati</taxon>
        <taxon>Bacillota</taxon>
        <taxon>Bacilli</taxon>
        <taxon>Lactobacillales</taxon>
        <taxon>Streptococcaceae</taxon>
        <taxon>Streptococcus</taxon>
    </lineage>
</organism>
<name>AROE_STRPN</name>
<sequence length="284" mass="31270">MKLDGYTRLAAVVANPIKHSISPFIHNRAFEATATNGAYVAWEIEASDLVETVANIRRYQMFGINLSMPYKEQVIPYLDKLSDEARLIGAVNTVVNENGNLIGYNTDGKGFFKCLPSFTISGKKMTLLGAGGAAKSILAQAILDGVSQISVFVRSVSMEKTRPYLDKLQEQTGFKVDLCALEYVSELQARIAESDLLVNATSVGMDGQSSPVPENIVLPETLLVADIIYQPFETPFLKWARSQGNPAVNGLGMLLYQAAEAFQLWTGKEMPTEEIWQSLTEKYQ</sequence>
<feature type="chain" id="PRO_0000136038" description="Shikimate dehydrogenase (NADP(+))">
    <location>
        <begin position="1"/>
        <end position="284"/>
    </location>
</feature>
<feature type="active site" description="Proton acceptor" evidence="1">
    <location>
        <position position="71"/>
    </location>
</feature>
<feature type="binding site" evidence="1">
    <location>
        <begin position="20"/>
        <end position="22"/>
    </location>
    <ligand>
        <name>shikimate</name>
        <dbReference type="ChEBI" id="CHEBI:36208"/>
    </ligand>
</feature>
<feature type="binding site" evidence="1">
    <location>
        <position position="67"/>
    </location>
    <ligand>
        <name>shikimate</name>
        <dbReference type="ChEBI" id="CHEBI:36208"/>
    </ligand>
</feature>
<feature type="binding site" evidence="1">
    <location>
        <position position="83"/>
    </location>
    <ligand>
        <name>NADP(+)</name>
        <dbReference type="ChEBI" id="CHEBI:58349"/>
    </ligand>
</feature>
<feature type="binding site" evidence="1">
    <location>
        <position position="92"/>
    </location>
    <ligand>
        <name>shikimate</name>
        <dbReference type="ChEBI" id="CHEBI:36208"/>
    </ligand>
</feature>
<feature type="binding site" evidence="1">
    <location>
        <position position="107"/>
    </location>
    <ligand>
        <name>shikimate</name>
        <dbReference type="ChEBI" id="CHEBI:36208"/>
    </ligand>
</feature>
<feature type="binding site" evidence="1">
    <location>
        <begin position="129"/>
        <end position="133"/>
    </location>
    <ligand>
        <name>NADP(+)</name>
        <dbReference type="ChEBI" id="CHEBI:58349"/>
    </ligand>
</feature>
<feature type="binding site" evidence="1">
    <location>
        <position position="227"/>
    </location>
    <ligand>
        <name>NADP(+)</name>
        <dbReference type="ChEBI" id="CHEBI:58349"/>
    </ligand>
</feature>
<feature type="binding site" evidence="1">
    <location>
        <position position="229"/>
    </location>
    <ligand>
        <name>shikimate</name>
        <dbReference type="ChEBI" id="CHEBI:36208"/>
    </ligand>
</feature>
<feature type="binding site" evidence="1">
    <location>
        <position position="250"/>
    </location>
    <ligand>
        <name>NADP(+)</name>
        <dbReference type="ChEBI" id="CHEBI:58349"/>
    </ligand>
</feature>
<gene>
    <name evidence="1" type="primary">aroE</name>
    <name type="ordered locus">SP_1376</name>
</gene>